<proteinExistence type="inferred from homology"/>
<protein>
    <recommendedName>
        <fullName>Chaperone protein ClpB</fullName>
    </recommendedName>
</protein>
<keyword id="KW-0067">ATP-binding</keyword>
<keyword id="KW-0143">Chaperone</keyword>
<keyword id="KW-0175">Coiled coil</keyword>
<keyword id="KW-0963">Cytoplasm</keyword>
<keyword id="KW-0547">Nucleotide-binding</keyword>
<keyword id="KW-0677">Repeat</keyword>
<keyword id="KW-0346">Stress response</keyword>
<sequence>MAITRKNLFGKLDATLFKGIESATTICKLRGNPYVELIHWLNQLWHQEDNDLKHIVRYFAVDVDAFERGLAQALARLPVGATSISDFSYHIELAIERAWVYASLECLDTRIRSGHLLLAMLTNMELRRALLAIAPEMEKIPLEHLSSDFNFITQASPETNEAATDGSPMYDGTLPGEASNAINGKSTATLAQYTTDLTALAREGKIDPVLGRNHEISTMVDILLRRRQNNPLLTGEAGVGKTAVVEGLALAIVAGEMPPALSQVSLLTLDVVALSAGASMKGEFEARLKNVLDEAMASPTPVILFIDEVHTLVGAGGNAGTGDAANLLKPALARGQLRTIGATTWSEFKRHIEKDPALTRRFQVLQVDEPDEDTAISMLRGLTPALEKHHGVWIMDEALQAAVRLSHRYIPARQLPDKAISLLDTACARVAVAQFSQPAELQQLTFQSETAQTELSSLEKAQHFGKGQDERTALLEATIAQHSAAANKLEQRWQAERELVTAITATRTVLYELVSQPTPDEEKRQQYQQQLAQLEEQLLLIRSAQPLVQAEVNATVIANIVADWTGIQVGQMLKDDIRAVMELPQRLEERVIGQPHALVQLSENIMTARAGMADPRKPLGVFMLVGPSGVGKTETALAIAESMYGGEQNLITINMSEYQESHTVSSLKGSPPGYVGYGEGGVLTEAVRRKPYSVVLLDEIEKAHSDVHELFFQVFDKGQMEDGEGRFIDFKNTILLLTSNVGSELLSNLFADPDTAPDQDGILSALQPELLKVFPAAFLGRVTVIPYLPLQQSALQHIVRLHLDRIGQRLQSQHQLTLQYSDVVVDDVVSRCSVAETGARMLIRYIEQNITPEIGKFILRDHDAIPNQIVFVDKVENKFTVSVLNEKINN</sequence>
<organism>
    <name type="scientific">Yersinia enterocolitica</name>
    <dbReference type="NCBI Taxonomy" id="630"/>
    <lineage>
        <taxon>Bacteria</taxon>
        <taxon>Pseudomonadati</taxon>
        <taxon>Pseudomonadota</taxon>
        <taxon>Gammaproteobacteria</taxon>
        <taxon>Enterobacterales</taxon>
        <taxon>Yersiniaceae</taxon>
        <taxon>Yersinia</taxon>
    </lineage>
</organism>
<feature type="chain" id="PRO_0000191210" description="Chaperone protein ClpB">
    <location>
        <begin position="1"/>
        <end position="890"/>
    </location>
</feature>
<feature type="domain" description="Clp R" evidence="2">
    <location>
        <begin position="9"/>
        <end position="150"/>
    </location>
</feature>
<feature type="region of interest" description="Repeat 1" evidence="2">
    <location>
        <begin position="12"/>
        <end position="77"/>
    </location>
</feature>
<feature type="region of interest" description="Repeat 2" evidence="2">
    <location>
        <begin position="87"/>
        <end position="150"/>
    </location>
</feature>
<feature type="region of interest" description="NBD1" evidence="1">
    <location>
        <begin position="171"/>
        <end position="369"/>
    </location>
</feature>
<feature type="region of interest" description="Linker" evidence="1">
    <location>
        <begin position="370"/>
        <end position="566"/>
    </location>
</feature>
<feature type="region of interest" description="NBD2" evidence="1">
    <location>
        <begin position="567"/>
        <end position="789"/>
    </location>
</feature>
<feature type="region of interest" description="C-terminal" evidence="1">
    <location>
        <begin position="790"/>
        <end position="890"/>
    </location>
</feature>
<feature type="coiled-coil region" evidence="1">
    <location>
        <begin position="420"/>
        <end position="544"/>
    </location>
</feature>
<feature type="binding site" evidence="1">
    <location>
        <begin position="235"/>
        <end position="242"/>
    </location>
    <ligand>
        <name>ATP</name>
        <dbReference type="ChEBI" id="CHEBI:30616"/>
        <label>1</label>
    </ligand>
</feature>
<feature type="binding site" evidence="1">
    <location>
        <begin position="626"/>
        <end position="633"/>
    </location>
    <ligand>
        <name>ATP</name>
        <dbReference type="ChEBI" id="CHEBI:30616"/>
        <label>2</label>
    </ligand>
</feature>
<gene>
    <name type="primary">clpB</name>
</gene>
<accession>Q9F746</accession>
<evidence type="ECO:0000250" key="1"/>
<evidence type="ECO:0000255" key="2">
    <source>
        <dbReference type="PROSITE-ProRule" id="PRU01251"/>
    </source>
</evidence>
<evidence type="ECO:0000305" key="3"/>
<comment type="function">
    <text evidence="1">Part of a stress-induced multi-chaperone system, it is involved in the recovery of the cell from heat-induced damage, in cooperation with DnaK, DnaJ and GrpE. Acts before DnaK, in the processing of protein aggregates. Protein binding stimulates the ATPase activity; ATP hydrolysis unfolds the denatured protein aggregates, which probably helps expose new hydrophobic binding sites on the surface of ClpB-bound aggregates, contributing to the solubilization and refolding of denatured protein aggregates by DnaK (By similarity). Affects level of invasin and motility in Y.enterocolitica.</text>
</comment>
<comment type="subunit">
    <text evidence="1">Homohexamer. The oligomerization is ATP-dependent (By similarity).</text>
</comment>
<comment type="subcellular location">
    <subcellularLocation>
        <location evidence="3">Cytoplasm</location>
    </subcellularLocation>
</comment>
<comment type="domain">
    <text evidence="1">The Clp repeat (R) domain probably functions as a substrate-discriminating domain, recruiting aggregated proteins to the ClpB hexamer and/or stabilizing bound proteins. The NBD2 domain is responsible for oligomerization, whereas the NBD1 domain stabilizes the hexamer probably in an ATP-dependent manner. The movement of the coiled-coil domain is essential for ClpB ability to rescue proteins from an aggregated state, probably by pulling apart large aggregated proteins, which are bound between the coiled-coils motifs of adjacent ClpB subunits in the functional hexamer (By similarity).</text>
</comment>
<comment type="similarity">
    <text evidence="3">Belongs to the ClpA/ClpB family.</text>
</comment>
<reference key="1">
    <citation type="journal article" date="2000" name="J. Bacteriol.">
        <title>Yersinia enterocolitica ClpB affects levels of invasin and motility.</title>
        <authorList>
            <person name="Badger J.L."/>
            <person name="Young B.M."/>
            <person name="Darwin A.J."/>
            <person name="Miller V.L."/>
        </authorList>
    </citation>
    <scope>NUCLEOTIDE SEQUENCE [GENOMIC DNA]</scope>
</reference>
<name>CLPB_YEREN</name>
<dbReference type="EMBL" id="AF285784">
    <property type="protein sequence ID" value="AAG00524.1"/>
    <property type="molecule type" value="Genomic_DNA"/>
</dbReference>
<dbReference type="SMR" id="Q9F746"/>
<dbReference type="KEGG" id="yew:CH47_2044"/>
<dbReference type="GO" id="GO:0005737">
    <property type="term" value="C:cytoplasm"/>
    <property type="evidence" value="ECO:0007669"/>
    <property type="project" value="UniProtKB-SubCell"/>
</dbReference>
<dbReference type="GO" id="GO:0005524">
    <property type="term" value="F:ATP binding"/>
    <property type="evidence" value="ECO:0007669"/>
    <property type="project" value="UniProtKB-KW"/>
</dbReference>
<dbReference type="GO" id="GO:0016887">
    <property type="term" value="F:ATP hydrolysis activity"/>
    <property type="evidence" value="ECO:0007669"/>
    <property type="project" value="InterPro"/>
</dbReference>
<dbReference type="GO" id="GO:0034605">
    <property type="term" value="P:cellular response to heat"/>
    <property type="evidence" value="ECO:0007669"/>
    <property type="project" value="TreeGrafter"/>
</dbReference>
<dbReference type="CDD" id="cd00009">
    <property type="entry name" value="AAA"/>
    <property type="match status" value="1"/>
</dbReference>
<dbReference type="CDD" id="cd19499">
    <property type="entry name" value="RecA-like_ClpB_Hsp104-like"/>
    <property type="match status" value="1"/>
</dbReference>
<dbReference type="Gene3D" id="1.10.8.60">
    <property type="match status" value="1"/>
</dbReference>
<dbReference type="Gene3D" id="1.10.1780.10">
    <property type="entry name" value="Clp, N-terminal domain"/>
    <property type="match status" value="1"/>
</dbReference>
<dbReference type="Gene3D" id="3.40.50.300">
    <property type="entry name" value="P-loop containing nucleotide triphosphate hydrolases"/>
    <property type="match status" value="3"/>
</dbReference>
<dbReference type="InterPro" id="IPR003593">
    <property type="entry name" value="AAA+_ATPase"/>
</dbReference>
<dbReference type="InterPro" id="IPR003959">
    <property type="entry name" value="ATPase_AAA_core"/>
</dbReference>
<dbReference type="InterPro" id="IPR017729">
    <property type="entry name" value="ATPase_T6SS_ClpV1"/>
</dbReference>
<dbReference type="InterPro" id="IPR019489">
    <property type="entry name" value="Clp_ATPase_C"/>
</dbReference>
<dbReference type="InterPro" id="IPR036628">
    <property type="entry name" value="Clp_N_dom_sf"/>
</dbReference>
<dbReference type="InterPro" id="IPR004176">
    <property type="entry name" value="Clp_R_dom"/>
</dbReference>
<dbReference type="InterPro" id="IPR001270">
    <property type="entry name" value="ClpA/B"/>
</dbReference>
<dbReference type="InterPro" id="IPR018368">
    <property type="entry name" value="ClpA/B_CS1"/>
</dbReference>
<dbReference type="InterPro" id="IPR028299">
    <property type="entry name" value="ClpA/B_CS2"/>
</dbReference>
<dbReference type="InterPro" id="IPR041546">
    <property type="entry name" value="ClpA/ClpB_AAA_lid"/>
</dbReference>
<dbReference type="InterPro" id="IPR050130">
    <property type="entry name" value="ClpA_ClpB"/>
</dbReference>
<dbReference type="InterPro" id="IPR027417">
    <property type="entry name" value="P-loop_NTPase"/>
</dbReference>
<dbReference type="NCBIfam" id="TIGR03345">
    <property type="entry name" value="VI_ClpV1"/>
    <property type="match status" value="1"/>
</dbReference>
<dbReference type="PANTHER" id="PTHR11638">
    <property type="entry name" value="ATP-DEPENDENT CLP PROTEASE"/>
    <property type="match status" value="1"/>
</dbReference>
<dbReference type="PANTHER" id="PTHR11638:SF184">
    <property type="entry name" value="ATPASE WITH CHAPERONE ACTIVITY"/>
    <property type="match status" value="1"/>
</dbReference>
<dbReference type="Pfam" id="PF00004">
    <property type="entry name" value="AAA"/>
    <property type="match status" value="1"/>
</dbReference>
<dbReference type="Pfam" id="PF07724">
    <property type="entry name" value="AAA_2"/>
    <property type="match status" value="1"/>
</dbReference>
<dbReference type="Pfam" id="PF17871">
    <property type="entry name" value="AAA_lid_9"/>
    <property type="match status" value="1"/>
</dbReference>
<dbReference type="Pfam" id="PF10431">
    <property type="entry name" value="ClpB_D2-small"/>
    <property type="match status" value="1"/>
</dbReference>
<dbReference type="PRINTS" id="PR00300">
    <property type="entry name" value="CLPPROTEASEA"/>
</dbReference>
<dbReference type="SMART" id="SM00382">
    <property type="entry name" value="AAA"/>
    <property type="match status" value="2"/>
</dbReference>
<dbReference type="SMART" id="SM01086">
    <property type="entry name" value="ClpB_D2-small"/>
    <property type="match status" value="1"/>
</dbReference>
<dbReference type="SUPFAM" id="SSF81923">
    <property type="entry name" value="Double Clp-N motif"/>
    <property type="match status" value="1"/>
</dbReference>
<dbReference type="SUPFAM" id="SSF52540">
    <property type="entry name" value="P-loop containing nucleoside triphosphate hydrolases"/>
    <property type="match status" value="2"/>
</dbReference>
<dbReference type="PROSITE" id="PS51903">
    <property type="entry name" value="CLP_R"/>
    <property type="match status" value="1"/>
</dbReference>
<dbReference type="PROSITE" id="PS00870">
    <property type="entry name" value="CLPAB_1"/>
    <property type="match status" value="1"/>
</dbReference>
<dbReference type="PROSITE" id="PS00871">
    <property type="entry name" value="CLPAB_2"/>
    <property type="match status" value="1"/>
</dbReference>